<gene>
    <name evidence="1" type="primary">gatC</name>
    <name type="ordered locus">Mlg_0168</name>
</gene>
<keyword id="KW-0067">ATP-binding</keyword>
<keyword id="KW-0436">Ligase</keyword>
<keyword id="KW-0547">Nucleotide-binding</keyword>
<keyword id="KW-0648">Protein biosynthesis</keyword>
<keyword id="KW-1185">Reference proteome</keyword>
<organism>
    <name type="scientific">Alkalilimnicola ehrlichii (strain ATCC BAA-1101 / DSM 17681 / MLHE-1)</name>
    <dbReference type="NCBI Taxonomy" id="187272"/>
    <lineage>
        <taxon>Bacteria</taxon>
        <taxon>Pseudomonadati</taxon>
        <taxon>Pseudomonadota</taxon>
        <taxon>Gammaproteobacteria</taxon>
        <taxon>Chromatiales</taxon>
        <taxon>Ectothiorhodospiraceae</taxon>
        <taxon>Alkalilimnicola</taxon>
    </lineage>
</organism>
<sequence>MSLEESEVKHIAHLARVAIEADDIPGYARNLSDILDFVEQMKDIDTSGVTPMAHPLDAVQRLREDEVTEPDQRERFQAIAPATEAGLYLVPRVIE</sequence>
<comment type="function">
    <text evidence="1">Allows the formation of correctly charged Asn-tRNA(Asn) or Gln-tRNA(Gln) through the transamidation of misacylated Asp-tRNA(Asn) or Glu-tRNA(Gln) in organisms which lack either or both of asparaginyl-tRNA or glutaminyl-tRNA synthetases. The reaction takes place in the presence of glutamine and ATP through an activated phospho-Asp-tRNA(Asn) or phospho-Glu-tRNA(Gln).</text>
</comment>
<comment type="catalytic activity">
    <reaction evidence="1">
        <text>L-glutamyl-tRNA(Gln) + L-glutamine + ATP + H2O = L-glutaminyl-tRNA(Gln) + L-glutamate + ADP + phosphate + H(+)</text>
        <dbReference type="Rhea" id="RHEA:17521"/>
        <dbReference type="Rhea" id="RHEA-COMP:9681"/>
        <dbReference type="Rhea" id="RHEA-COMP:9684"/>
        <dbReference type="ChEBI" id="CHEBI:15377"/>
        <dbReference type="ChEBI" id="CHEBI:15378"/>
        <dbReference type="ChEBI" id="CHEBI:29985"/>
        <dbReference type="ChEBI" id="CHEBI:30616"/>
        <dbReference type="ChEBI" id="CHEBI:43474"/>
        <dbReference type="ChEBI" id="CHEBI:58359"/>
        <dbReference type="ChEBI" id="CHEBI:78520"/>
        <dbReference type="ChEBI" id="CHEBI:78521"/>
        <dbReference type="ChEBI" id="CHEBI:456216"/>
    </reaction>
</comment>
<comment type="catalytic activity">
    <reaction evidence="1">
        <text>L-aspartyl-tRNA(Asn) + L-glutamine + ATP + H2O = L-asparaginyl-tRNA(Asn) + L-glutamate + ADP + phosphate + 2 H(+)</text>
        <dbReference type="Rhea" id="RHEA:14513"/>
        <dbReference type="Rhea" id="RHEA-COMP:9674"/>
        <dbReference type="Rhea" id="RHEA-COMP:9677"/>
        <dbReference type="ChEBI" id="CHEBI:15377"/>
        <dbReference type="ChEBI" id="CHEBI:15378"/>
        <dbReference type="ChEBI" id="CHEBI:29985"/>
        <dbReference type="ChEBI" id="CHEBI:30616"/>
        <dbReference type="ChEBI" id="CHEBI:43474"/>
        <dbReference type="ChEBI" id="CHEBI:58359"/>
        <dbReference type="ChEBI" id="CHEBI:78515"/>
        <dbReference type="ChEBI" id="CHEBI:78516"/>
        <dbReference type="ChEBI" id="CHEBI:456216"/>
    </reaction>
</comment>
<comment type="subunit">
    <text evidence="1">Heterotrimer of A, B and C subunits.</text>
</comment>
<comment type="similarity">
    <text evidence="1">Belongs to the GatC family.</text>
</comment>
<accession>Q0ACB4</accession>
<feature type="chain" id="PRO_1000016061" description="Aspartyl/glutamyl-tRNA(Asn/Gln) amidotransferase subunit C">
    <location>
        <begin position="1"/>
        <end position="95"/>
    </location>
</feature>
<name>GATC_ALKEH</name>
<evidence type="ECO:0000255" key="1">
    <source>
        <dbReference type="HAMAP-Rule" id="MF_00122"/>
    </source>
</evidence>
<proteinExistence type="inferred from homology"/>
<protein>
    <recommendedName>
        <fullName evidence="1">Aspartyl/glutamyl-tRNA(Asn/Gln) amidotransferase subunit C</fullName>
        <shortName evidence="1">Asp/Glu-ADT subunit C</shortName>
        <ecNumber evidence="1">6.3.5.-</ecNumber>
    </recommendedName>
</protein>
<reference key="1">
    <citation type="submission" date="2006-08" db="EMBL/GenBank/DDBJ databases">
        <title>Complete sequence of Alkalilimnicola ehrilichei MLHE-1.</title>
        <authorList>
            <person name="Copeland A."/>
            <person name="Lucas S."/>
            <person name="Lapidus A."/>
            <person name="Barry K."/>
            <person name="Detter J.C."/>
            <person name="Glavina del Rio T."/>
            <person name="Hammon N."/>
            <person name="Israni S."/>
            <person name="Dalin E."/>
            <person name="Tice H."/>
            <person name="Pitluck S."/>
            <person name="Sims D."/>
            <person name="Brettin T."/>
            <person name="Bruce D."/>
            <person name="Han C."/>
            <person name="Tapia R."/>
            <person name="Gilna P."/>
            <person name="Schmutz J."/>
            <person name="Larimer F."/>
            <person name="Land M."/>
            <person name="Hauser L."/>
            <person name="Kyrpides N."/>
            <person name="Mikhailova N."/>
            <person name="Oremland R.S."/>
            <person name="Hoeft S.E."/>
            <person name="Switzer-Blum J."/>
            <person name="Kulp T."/>
            <person name="King G."/>
            <person name="Tabita R."/>
            <person name="Witte B."/>
            <person name="Santini J.M."/>
            <person name="Basu P."/>
            <person name="Hollibaugh J.T."/>
            <person name="Xie G."/>
            <person name="Stolz J.F."/>
            <person name="Richardson P."/>
        </authorList>
    </citation>
    <scope>NUCLEOTIDE SEQUENCE [LARGE SCALE GENOMIC DNA]</scope>
    <source>
        <strain>ATCC BAA-1101 / DSM 17681 / MLHE-1</strain>
    </source>
</reference>
<dbReference type="EC" id="6.3.5.-" evidence="1"/>
<dbReference type="EMBL" id="CP000453">
    <property type="protein sequence ID" value="ABI55523.1"/>
    <property type="molecule type" value="Genomic_DNA"/>
</dbReference>
<dbReference type="RefSeq" id="WP_011627919.1">
    <property type="nucleotide sequence ID" value="NC_008340.1"/>
</dbReference>
<dbReference type="SMR" id="Q0ACB4"/>
<dbReference type="KEGG" id="aeh:Mlg_0168"/>
<dbReference type="eggNOG" id="COG0721">
    <property type="taxonomic scope" value="Bacteria"/>
</dbReference>
<dbReference type="HOGENOM" id="CLU_105899_2_2_6"/>
<dbReference type="OrthoDB" id="9794326at2"/>
<dbReference type="Proteomes" id="UP000001962">
    <property type="component" value="Chromosome"/>
</dbReference>
<dbReference type="GO" id="GO:0050566">
    <property type="term" value="F:asparaginyl-tRNA synthase (glutamine-hydrolyzing) activity"/>
    <property type="evidence" value="ECO:0007669"/>
    <property type="project" value="RHEA"/>
</dbReference>
<dbReference type="GO" id="GO:0005524">
    <property type="term" value="F:ATP binding"/>
    <property type="evidence" value="ECO:0007669"/>
    <property type="project" value="UniProtKB-KW"/>
</dbReference>
<dbReference type="GO" id="GO:0050567">
    <property type="term" value="F:glutaminyl-tRNA synthase (glutamine-hydrolyzing) activity"/>
    <property type="evidence" value="ECO:0007669"/>
    <property type="project" value="UniProtKB-UniRule"/>
</dbReference>
<dbReference type="GO" id="GO:0070681">
    <property type="term" value="P:glutaminyl-tRNAGln biosynthesis via transamidation"/>
    <property type="evidence" value="ECO:0007669"/>
    <property type="project" value="TreeGrafter"/>
</dbReference>
<dbReference type="GO" id="GO:0006450">
    <property type="term" value="P:regulation of translational fidelity"/>
    <property type="evidence" value="ECO:0007669"/>
    <property type="project" value="InterPro"/>
</dbReference>
<dbReference type="GO" id="GO:0006412">
    <property type="term" value="P:translation"/>
    <property type="evidence" value="ECO:0007669"/>
    <property type="project" value="UniProtKB-UniRule"/>
</dbReference>
<dbReference type="Gene3D" id="1.10.20.60">
    <property type="entry name" value="Glu-tRNAGln amidotransferase C subunit, N-terminal domain"/>
    <property type="match status" value="1"/>
</dbReference>
<dbReference type="HAMAP" id="MF_00122">
    <property type="entry name" value="GatC"/>
    <property type="match status" value="1"/>
</dbReference>
<dbReference type="InterPro" id="IPR036113">
    <property type="entry name" value="Asp/Glu-ADT_sf_sub_c"/>
</dbReference>
<dbReference type="InterPro" id="IPR003837">
    <property type="entry name" value="GatC"/>
</dbReference>
<dbReference type="NCBIfam" id="TIGR00135">
    <property type="entry name" value="gatC"/>
    <property type="match status" value="1"/>
</dbReference>
<dbReference type="PANTHER" id="PTHR15004">
    <property type="entry name" value="GLUTAMYL-TRNA(GLN) AMIDOTRANSFERASE SUBUNIT C, MITOCHONDRIAL"/>
    <property type="match status" value="1"/>
</dbReference>
<dbReference type="PANTHER" id="PTHR15004:SF0">
    <property type="entry name" value="GLUTAMYL-TRNA(GLN) AMIDOTRANSFERASE SUBUNIT C, MITOCHONDRIAL"/>
    <property type="match status" value="1"/>
</dbReference>
<dbReference type="Pfam" id="PF02686">
    <property type="entry name" value="GatC"/>
    <property type="match status" value="1"/>
</dbReference>
<dbReference type="SUPFAM" id="SSF141000">
    <property type="entry name" value="Glu-tRNAGln amidotransferase C subunit"/>
    <property type="match status" value="1"/>
</dbReference>